<gene>
    <name type="primary">CLGN</name>
</gene>
<name>CLGN_HUMAN</name>
<comment type="function">
    <text evidence="1">Functions during spermatogenesis as a chaperone for a range of client proteins that are important for sperm adhesion onto the egg zona pellucida and for subsequent penetration of the zona pellucida. Required for normal sperm migration from the uterus into the oviduct. Required for normal male fertility. Binds calcium ions (By similarity).</text>
</comment>
<comment type="subunit">
    <text evidence="1 6">Interacts with PPIB. Interacts with ADAM2 (By similarity). Interacts with PDILT.</text>
</comment>
<comment type="subcellular location">
    <subcellularLocation>
        <location>Endoplasmic reticulum membrane</location>
        <topology>Single-pass type I membrane protein</topology>
    </subcellularLocation>
</comment>
<comment type="alternative products">
    <event type="alternative splicing"/>
    <isoform>
        <id>O14967-1</id>
        <name>1</name>
        <sequence type="displayed"/>
    </isoform>
    <isoform>
        <id>O14967-2</id>
        <name>2</name>
        <sequence type="described" ref="VSP_055517 VSP_055518"/>
    </isoform>
</comment>
<comment type="tissue specificity">
    <text evidence="7">Detected in testis (at protein level). Detected in testis.</text>
</comment>
<comment type="similarity">
    <text evidence="9">Belongs to the calreticulin family.</text>
</comment>
<sequence length="610" mass="70039">MHFQAFWLCLGLLFISINAEFMDDDVETEDFEENSEEIDVNESELSSEIKYKTPQPIGEVYFAETFDSGRLAGWVLSKAKKDDMDEEISIYDGRWEIEELKENQVPGDRGLVLKSRAKHHAISAVLAKPFIFADKPLIVQYEVNFQDGIDCGGAYIKLLADTDDLILENFYDKTSYIIMFGPDKCGEDYKLHFIFRHKHPKTGVFEEKHAKPPDVDLKKFFTDRKTHLYTLVMNPDDTFEVLVDQTVVNKGSLLEDVVPPIKPPKEIEDPNDKKPEEWDERAKIPDPSAVKPEDWDESEPAQIEDSSVVKPAGWLDDEPKFIPDPNAEKPDDWNEDTDGEWEAPQILNPACRIGCGEWKPPMIDNPKYKGVWRPPLVDNPNYQGIWSPRKIPNPDYFEDDHPFLLTSFSALGLELWSMTSDIYFDNFIICSEKEVADHWAADGWRWKIMIANANKPGVLKQLMAAAEGHPWLWLIYLVTAGVPIALITSFCWPRKVKKKHKDTEYKKTDICIPQTKGVLEQEEKEEKAALEKPMDLEEEKKQNDGEMLEKEEESEPEEKSEEEIEIIEGQEESNQSNKSGSEDEMKEADESTGSGDGPIKSVRKRRVRKD</sequence>
<organism>
    <name type="scientific">Homo sapiens</name>
    <name type="common">Human</name>
    <dbReference type="NCBI Taxonomy" id="9606"/>
    <lineage>
        <taxon>Eukaryota</taxon>
        <taxon>Metazoa</taxon>
        <taxon>Chordata</taxon>
        <taxon>Craniata</taxon>
        <taxon>Vertebrata</taxon>
        <taxon>Euteleostomi</taxon>
        <taxon>Mammalia</taxon>
        <taxon>Eutheria</taxon>
        <taxon>Euarchontoglires</taxon>
        <taxon>Primates</taxon>
        <taxon>Haplorrhini</taxon>
        <taxon>Catarrhini</taxon>
        <taxon>Hominidae</taxon>
        <taxon>Homo</taxon>
    </lineage>
</organism>
<accession>O14967</accession>
<accession>B3KS90</accession>
<accession>B4DXV8</accession>
<accession>D3DNY8</accession>
<evidence type="ECO:0000250" key="1"/>
<evidence type="ECO:0000250" key="2">
    <source>
        <dbReference type="UniProtKB" id="P27824"/>
    </source>
</evidence>
<evidence type="ECO:0000250" key="3">
    <source>
        <dbReference type="UniProtKB" id="P52194"/>
    </source>
</evidence>
<evidence type="ECO:0000255" key="4"/>
<evidence type="ECO:0000256" key="5">
    <source>
        <dbReference type="SAM" id="MobiDB-lite"/>
    </source>
</evidence>
<evidence type="ECO:0000269" key="6">
    <source>
    </source>
</evidence>
<evidence type="ECO:0000269" key="7">
    <source>
    </source>
</evidence>
<evidence type="ECO:0000303" key="8">
    <source>
    </source>
</evidence>
<evidence type="ECO:0000305" key="9"/>
<evidence type="ECO:0007744" key="10">
    <source>
    </source>
</evidence>
<feature type="signal peptide" evidence="4">
    <location>
        <begin position="1"/>
        <end position="19"/>
    </location>
</feature>
<feature type="chain" id="PRO_0000004210" description="Calmegin">
    <location>
        <begin position="20"/>
        <end position="610"/>
    </location>
</feature>
<feature type="topological domain" description="Lumenal" evidence="4">
    <location>
        <begin position="20"/>
        <end position="471"/>
    </location>
</feature>
<feature type="transmembrane region" description="Helical" evidence="4">
    <location>
        <begin position="472"/>
        <end position="492"/>
    </location>
</feature>
<feature type="topological domain" description="Cytoplasmic" evidence="4">
    <location>
        <begin position="493"/>
        <end position="610"/>
    </location>
</feature>
<feature type="repeat" description="1-1">
    <location>
        <begin position="267"/>
        <end position="280"/>
    </location>
</feature>
<feature type="repeat" description="1-2">
    <location>
        <begin position="284"/>
        <end position="297"/>
    </location>
</feature>
<feature type="repeat" description="1-3">
    <location>
        <begin position="303"/>
        <end position="316"/>
    </location>
</feature>
<feature type="repeat" description="1-4">
    <location>
        <begin position="322"/>
        <end position="335"/>
    </location>
</feature>
<feature type="repeat" description="2-1">
    <location>
        <begin position="339"/>
        <end position="352"/>
    </location>
</feature>
<feature type="repeat" description="2-2">
    <location>
        <begin position="356"/>
        <end position="369"/>
    </location>
</feature>
<feature type="repeat" description="2-3">
    <location>
        <begin position="370"/>
        <end position="383"/>
    </location>
</feature>
<feature type="repeat" description="2-4">
    <location>
        <begin position="384"/>
        <end position="397"/>
    </location>
</feature>
<feature type="region of interest" description="Disordered" evidence="5">
    <location>
        <begin position="258"/>
        <end position="338"/>
    </location>
</feature>
<feature type="region of interest" description="Interaction with PPIB" evidence="1">
    <location>
        <begin position="317"/>
        <end position="350"/>
    </location>
</feature>
<feature type="region of interest" description="Disordered" evidence="5">
    <location>
        <begin position="521"/>
        <end position="610"/>
    </location>
</feature>
<feature type="compositionally biased region" description="Basic and acidic residues" evidence="5">
    <location>
        <begin position="263"/>
        <end position="284"/>
    </location>
</feature>
<feature type="compositionally biased region" description="Basic and acidic residues" evidence="5">
    <location>
        <begin position="317"/>
        <end position="332"/>
    </location>
</feature>
<feature type="compositionally biased region" description="Basic and acidic residues" evidence="5">
    <location>
        <begin position="521"/>
        <end position="548"/>
    </location>
</feature>
<feature type="compositionally biased region" description="Acidic residues" evidence="5">
    <location>
        <begin position="549"/>
        <end position="571"/>
    </location>
</feature>
<feature type="compositionally biased region" description="Basic residues" evidence="5">
    <location>
        <begin position="601"/>
        <end position="610"/>
    </location>
</feature>
<feature type="modified residue" description="N6-acetyllysine" evidence="2">
    <location>
        <position position="128"/>
    </location>
</feature>
<feature type="modified residue" description="Phosphoserine" evidence="10">
    <location>
        <position position="560"/>
    </location>
</feature>
<feature type="modified residue" description="Phosphoserine" evidence="10">
    <location>
        <position position="576"/>
    </location>
</feature>
<feature type="modified residue" description="Phosphoserine" evidence="3">
    <location>
        <position position="579"/>
    </location>
</feature>
<feature type="modified residue" description="Phosphoserine" evidence="3">
    <location>
        <position position="581"/>
    </location>
</feature>
<feature type="modified residue" description="Phosphoserine" evidence="3">
    <location>
        <position position="591"/>
    </location>
</feature>
<feature type="modified residue" description="Phosphoserine" evidence="3">
    <location>
        <position position="594"/>
    </location>
</feature>
<feature type="modified residue" description="Phosphoserine" evidence="2">
    <location>
        <position position="601"/>
    </location>
</feature>
<feature type="disulfide bond" evidence="1">
    <location>
        <begin position="151"/>
        <end position="185"/>
    </location>
</feature>
<feature type="disulfide bond" evidence="1">
    <location>
        <begin position="351"/>
        <end position="355"/>
    </location>
</feature>
<feature type="splice variant" id="VSP_055517" description="In isoform 2." evidence="8">
    <location>
        <begin position="54"/>
        <end position="211"/>
    </location>
</feature>
<feature type="splice variant" id="VSP_055518" description="In isoform 2." evidence="8">
    <location>
        <begin position="378"/>
        <end position="424"/>
    </location>
</feature>
<feature type="sequence variant" id="VAR_024400" description="In dbSNP:rs2567241.">
    <original>A</original>
    <variation>S</variation>
    <location>
        <position position="160"/>
    </location>
</feature>
<feature type="sequence variant" id="VAR_033776" description="In dbSNP:rs2175563.">
    <original>V</original>
    <variation>I</variation>
    <location>
        <position position="290"/>
    </location>
</feature>
<feature type="sequence variant" id="VAR_048590" description="In dbSNP:rs12513290.">
    <original>R</original>
    <variation>W</variation>
    <location>
        <position position="352"/>
    </location>
</feature>
<feature type="sequence conflict" description="In Ref. 2; BAG63520." evidence="9" ref="2">
    <original>V</original>
    <variation>A</variation>
    <location>
        <position position="232"/>
    </location>
</feature>
<keyword id="KW-0007">Acetylation</keyword>
<keyword id="KW-0025">Alternative splicing</keyword>
<keyword id="KW-0106">Calcium</keyword>
<keyword id="KW-0143">Chaperone</keyword>
<keyword id="KW-1015">Disulfide bond</keyword>
<keyword id="KW-0256">Endoplasmic reticulum</keyword>
<keyword id="KW-0472">Membrane</keyword>
<keyword id="KW-0597">Phosphoprotein</keyword>
<keyword id="KW-1267">Proteomics identification</keyword>
<keyword id="KW-1185">Reference proteome</keyword>
<keyword id="KW-0677">Repeat</keyword>
<keyword id="KW-0732">Signal</keyword>
<keyword id="KW-0812">Transmembrane</keyword>
<keyword id="KW-1133">Transmembrane helix</keyword>
<reference key="1">
    <citation type="journal article" date="1997" name="Gene">
        <title>Cloning and characterization of the human Calmegin gene encoding putative testis-specific chaperone.</title>
        <authorList>
            <person name="Tanaka H."/>
            <person name="Ikawa M."/>
            <person name="Tsuchida J."/>
            <person name="Nozaki M."/>
            <person name="Suzuki M."/>
            <person name="Fujiwara T."/>
            <person name="Okabe M."/>
            <person name="Nishimune Y."/>
        </authorList>
    </citation>
    <scope>NUCLEOTIDE SEQUENCE [MRNA] (ISOFORM 1)</scope>
    <scope>TISSUE SPECIFICITY</scope>
    <source>
        <tissue>Testis</tissue>
    </source>
</reference>
<reference key="2">
    <citation type="journal article" date="2004" name="Nat. Genet.">
        <title>Complete sequencing and characterization of 21,243 full-length human cDNAs.</title>
        <authorList>
            <person name="Ota T."/>
            <person name="Suzuki Y."/>
            <person name="Nishikawa T."/>
            <person name="Otsuki T."/>
            <person name="Sugiyama T."/>
            <person name="Irie R."/>
            <person name="Wakamatsu A."/>
            <person name="Hayashi K."/>
            <person name="Sato H."/>
            <person name="Nagai K."/>
            <person name="Kimura K."/>
            <person name="Makita H."/>
            <person name="Sekine M."/>
            <person name="Obayashi M."/>
            <person name="Nishi T."/>
            <person name="Shibahara T."/>
            <person name="Tanaka T."/>
            <person name="Ishii S."/>
            <person name="Yamamoto J."/>
            <person name="Saito K."/>
            <person name="Kawai Y."/>
            <person name="Isono Y."/>
            <person name="Nakamura Y."/>
            <person name="Nagahari K."/>
            <person name="Murakami K."/>
            <person name="Yasuda T."/>
            <person name="Iwayanagi T."/>
            <person name="Wagatsuma M."/>
            <person name="Shiratori A."/>
            <person name="Sudo H."/>
            <person name="Hosoiri T."/>
            <person name="Kaku Y."/>
            <person name="Kodaira H."/>
            <person name="Kondo H."/>
            <person name="Sugawara M."/>
            <person name="Takahashi M."/>
            <person name="Kanda K."/>
            <person name="Yokoi T."/>
            <person name="Furuya T."/>
            <person name="Kikkawa E."/>
            <person name="Omura Y."/>
            <person name="Abe K."/>
            <person name="Kamihara K."/>
            <person name="Katsuta N."/>
            <person name="Sato K."/>
            <person name="Tanikawa M."/>
            <person name="Yamazaki M."/>
            <person name="Ninomiya K."/>
            <person name="Ishibashi T."/>
            <person name="Yamashita H."/>
            <person name="Murakawa K."/>
            <person name="Fujimori K."/>
            <person name="Tanai H."/>
            <person name="Kimata M."/>
            <person name="Watanabe M."/>
            <person name="Hiraoka S."/>
            <person name="Chiba Y."/>
            <person name="Ishida S."/>
            <person name="Ono Y."/>
            <person name="Takiguchi S."/>
            <person name="Watanabe S."/>
            <person name="Yosida M."/>
            <person name="Hotuta T."/>
            <person name="Kusano J."/>
            <person name="Kanehori K."/>
            <person name="Takahashi-Fujii A."/>
            <person name="Hara H."/>
            <person name="Tanase T.-O."/>
            <person name="Nomura Y."/>
            <person name="Togiya S."/>
            <person name="Komai F."/>
            <person name="Hara R."/>
            <person name="Takeuchi K."/>
            <person name="Arita M."/>
            <person name="Imose N."/>
            <person name="Musashino K."/>
            <person name="Yuuki H."/>
            <person name="Oshima A."/>
            <person name="Sasaki N."/>
            <person name="Aotsuka S."/>
            <person name="Yoshikawa Y."/>
            <person name="Matsunawa H."/>
            <person name="Ichihara T."/>
            <person name="Shiohata N."/>
            <person name="Sano S."/>
            <person name="Moriya S."/>
            <person name="Momiyama H."/>
            <person name="Satoh N."/>
            <person name="Takami S."/>
            <person name="Terashima Y."/>
            <person name="Suzuki O."/>
            <person name="Nakagawa S."/>
            <person name="Senoh A."/>
            <person name="Mizoguchi H."/>
            <person name="Goto Y."/>
            <person name="Shimizu F."/>
            <person name="Wakebe H."/>
            <person name="Hishigaki H."/>
            <person name="Watanabe T."/>
            <person name="Sugiyama A."/>
            <person name="Takemoto M."/>
            <person name="Kawakami B."/>
            <person name="Yamazaki M."/>
            <person name="Watanabe K."/>
            <person name="Kumagai A."/>
            <person name="Itakura S."/>
            <person name="Fukuzumi Y."/>
            <person name="Fujimori Y."/>
            <person name="Komiyama M."/>
            <person name="Tashiro H."/>
            <person name="Tanigami A."/>
            <person name="Fujiwara T."/>
            <person name="Ono T."/>
            <person name="Yamada K."/>
            <person name="Fujii Y."/>
            <person name="Ozaki K."/>
            <person name="Hirao M."/>
            <person name="Ohmori Y."/>
            <person name="Kawabata A."/>
            <person name="Hikiji T."/>
            <person name="Kobatake N."/>
            <person name="Inagaki H."/>
            <person name="Ikema Y."/>
            <person name="Okamoto S."/>
            <person name="Okitani R."/>
            <person name="Kawakami T."/>
            <person name="Noguchi S."/>
            <person name="Itoh T."/>
            <person name="Shigeta K."/>
            <person name="Senba T."/>
            <person name="Matsumura K."/>
            <person name="Nakajima Y."/>
            <person name="Mizuno T."/>
            <person name="Morinaga M."/>
            <person name="Sasaki M."/>
            <person name="Togashi T."/>
            <person name="Oyama M."/>
            <person name="Hata H."/>
            <person name="Watanabe M."/>
            <person name="Komatsu T."/>
            <person name="Mizushima-Sugano J."/>
            <person name="Satoh T."/>
            <person name="Shirai Y."/>
            <person name="Takahashi Y."/>
            <person name="Nakagawa K."/>
            <person name="Okumura K."/>
            <person name="Nagase T."/>
            <person name="Nomura N."/>
            <person name="Kikuchi H."/>
            <person name="Masuho Y."/>
            <person name="Yamashita R."/>
            <person name="Nakai K."/>
            <person name="Yada T."/>
            <person name="Nakamura Y."/>
            <person name="Ohara O."/>
            <person name="Isogai T."/>
            <person name="Sugano S."/>
        </authorList>
    </citation>
    <scope>NUCLEOTIDE SEQUENCE [LARGE SCALE MRNA] (ISOFORMS 1 AND 2)</scope>
    <source>
        <tissue>Testis</tissue>
    </source>
</reference>
<reference key="3">
    <citation type="submission" date="2005-09" db="EMBL/GenBank/DDBJ databases">
        <authorList>
            <person name="Mural R.J."/>
            <person name="Istrail S."/>
            <person name="Sutton G.G."/>
            <person name="Florea L."/>
            <person name="Halpern A.L."/>
            <person name="Mobarry C.M."/>
            <person name="Lippert R."/>
            <person name="Walenz B."/>
            <person name="Shatkay H."/>
            <person name="Dew I."/>
            <person name="Miller J.R."/>
            <person name="Flanigan M.J."/>
            <person name="Edwards N.J."/>
            <person name="Bolanos R."/>
            <person name="Fasulo D."/>
            <person name="Halldorsson B.V."/>
            <person name="Hannenhalli S."/>
            <person name="Turner R."/>
            <person name="Yooseph S."/>
            <person name="Lu F."/>
            <person name="Nusskern D.R."/>
            <person name="Shue B.C."/>
            <person name="Zheng X.H."/>
            <person name="Zhong F."/>
            <person name="Delcher A.L."/>
            <person name="Huson D.H."/>
            <person name="Kravitz S.A."/>
            <person name="Mouchard L."/>
            <person name="Reinert K."/>
            <person name="Remington K.A."/>
            <person name="Clark A.G."/>
            <person name="Waterman M.S."/>
            <person name="Eichler E.E."/>
            <person name="Adams M.D."/>
            <person name="Hunkapiller M.W."/>
            <person name="Myers E.W."/>
            <person name="Venter J.C."/>
        </authorList>
    </citation>
    <scope>NUCLEOTIDE SEQUENCE [LARGE SCALE GENOMIC DNA]</scope>
</reference>
<reference key="4">
    <citation type="journal article" date="2004" name="Genome Res.">
        <title>The status, quality, and expansion of the NIH full-length cDNA project: the Mammalian Gene Collection (MGC).</title>
        <authorList>
            <consortium name="The MGC Project Team"/>
        </authorList>
    </citation>
    <scope>NUCLEOTIDE SEQUENCE [LARGE SCALE MRNA] (ISOFORM 1)</scope>
    <source>
        <tissue>Testis</tissue>
    </source>
</reference>
<reference key="5">
    <citation type="journal article" date="2006" name="Cell">
        <title>Global, in vivo, and site-specific phosphorylation dynamics in signaling networks.</title>
        <authorList>
            <person name="Olsen J.V."/>
            <person name="Blagoev B."/>
            <person name="Gnad F."/>
            <person name="Macek B."/>
            <person name="Kumar C."/>
            <person name="Mortensen P."/>
            <person name="Mann M."/>
        </authorList>
    </citation>
    <scope>PHOSPHORYLATION [LARGE SCALE ANALYSIS] AT SER-560 AND SER-576</scope>
    <scope>IDENTIFICATION BY MASS SPECTROMETRY [LARGE SCALE ANALYSIS]</scope>
    <source>
        <tissue>Cervix carcinoma</tissue>
    </source>
</reference>
<reference key="6">
    <citation type="journal article" date="2007" name="Mol. Biol. Cell">
        <title>A developmentally regulated chaperone complex for the endoplasmic reticulum of male haploid germ cells.</title>
        <authorList>
            <person name="van Lith M."/>
            <person name="Karala A.R."/>
            <person name="Bown D."/>
            <person name="Gatehouse J.A."/>
            <person name="Ruddock L.W."/>
            <person name="Saunders P.T.K."/>
            <person name="Benham A.M."/>
        </authorList>
    </citation>
    <scope>INTERACTION WITH PDILT</scope>
</reference>
<reference key="7">
    <citation type="journal article" date="2011" name="BMC Syst. Biol.">
        <title>Initial characterization of the human central proteome.</title>
        <authorList>
            <person name="Burkard T.R."/>
            <person name="Planyavsky M."/>
            <person name="Kaupe I."/>
            <person name="Breitwieser F.P."/>
            <person name="Buerckstuemmer T."/>
            <person name="Bennett K.L."/>
            <person name="Superti-Furga G."/>
            <person name="Colinge J."/>
        </authorList>
    </citation>
    <scope>IDENTIFICATION BY MASS SPECTROMETRY [LARGE SCALE ANALYSIS]</scope>
</reference>
<protein>
    <recommendedName>
        <fullName>Calmegin</fullName>
    </recommendedName>
</protein>
<proteinExistence type="evidence at protein level"/>
<dbReference type="EMBL" id="D86322">
    <property type="protein sequence ID" value="BAA22590.1"/>
    <property type="molecule type" value="mRNA"/>
</dbReference>
<dbReference type="EMBL" id="AK093096">
    <property type="protein sequence ID" value="BAG52652.1"/>
    <property type="molecule type" value="mRNA"/>
</dbReference>
<dbReference type="EMBL" id="AK302149">
    <property type="protein sequence ID" value="BAG63520.1"/>
    <property type="molecule type" value="mRNA"/>
</dbReference>
<dbReference type="EMBL" id="CH471056">
    <property type="protein sequence ID" value="EAX05099.1"/>
    <property type="molecule type" value="Genomic_DNA"/>
</dbReference>
<dbReference type="EMBL" id="CH471056">
    <property type="protein sequence ID" value="EAX05100.1"/>
    <property type="molecule type" value="Genomic_DNA"/>
</dbReference>
<dbReference type="EMBL" id="CH471056">
    <property type="protein sequence ID" value="EAX05101.1"/>
    <property type="molecule type" value="Genomic_DNA"/>
</dbReference>
<dbReference type="EMBL" id="BC028357">
    <property type="protein sequence ID" value="AAH28357.1"/>
    <property type="molecule type" value="mRNA"/>
</dbReference>
<dbReference type="CCDS" id="CCDS3751.1">
    <molecule id="O14967-1"/>
</dbReference>
<dbReference type="RefSeq" id="NP_001124147.1">
    <molecule id="O14967-1"/>
    <property type="nucleotide sequence ID" value="NM_001130675.2"/>
</dbReference>
<dbReference type="RefSeq" id="NP_004353.1">
    <molecule id="O14967-1"/>
    <property type="nucleotide sequence ID" value="NM_004362.3"/>
</dbReference>
<dbReference type="SMR" id="O14967"/>
<dbReference type="BioGRID" id="107477">
    <property type="interactions" value="305"/>
</dbReference>
<dbReference type="FunCoup" id="O14967">
    <property type="interactions" value="590"/>
</dbReference>
<dbReference type="IntAct" id="O14967">
    <property type="interactions" value="176"/>
</dbReference>
<dbReference type="MINT" id="O14967"/>
<dbReference type="STRING" id="9606.ENSP00000392782"/>
<dbReference type="ChEMBL" id="CHEMBL4295653"/>
<dbReference type="GlyGen" id="O14967">
    <property type="glycosylation" value="1 site, 2 O-linked glycans (1 site)"/>
</dbReference>
<dbReference type="iPTMnet" id="O14967"/>
<dbReference type="PhosphoSitePlus" id="O14967"/>
<dbReference type="SwissPalm" id="O14967"/>
<dbReference type="BioMuta" id="CLGN"/>
<dbReference type="jPOST" id="O14967"/>
<dbReference type="MassIVE" id="O14967"/>
<dbReference type="PaxDb" id="9606-ENSP00000326699"/>
<dbReference type="PeptideAtlas" id="O14967"/>
<dbReference type="ProteomicsDB" id="48342">
    <molecule id="O14967-1"/>
</dbReference>
<dbReference type="Pumba" id="O14967"/>
<dbReference type="Antibodypedia" id="16228">
    <property type="antibodies" value="209 antibodies from 31 providers"/>
</dbReference>
<dbReference type="DNASU" id="1047"/>
<dbReference type="Ensembl" id="ENST00000325617.10">
    <molecule id="O14967-1"/>
    <property type="protein sequence ID" value="ENSP00000326699.5"/>
    <property type="gene ID" value="ENSG00000153132.13"/>
</dbReference>
<dbReference type="Ensembl" id="ENST00000414773.5">
    <molecule id="O14967-1"/>
    <property type="protein sequence ID" value="ENSP00000392782.1"/>
    <property type="gene ID" value="ENSG00000153132.13"/>
</dbReference>
<dbReference type="GeneID" id="1047"/>
<dbReference type="KEGG" id="hsa:1047"/>
<dbReference type="MANE-Select" id="ENST00000325617.10">
    <property type="protein sequence ID" value="ENSP00000326699.5"/>
    <property type="RefSeq nucleotide sequence ID" value="NM_004362.3"/>
    <property type="RefSeq protein sequence ID" value="NP_004353.1"/>
</dbReference>
<dbReference type="UCSC" id="uc003iii.4">
    <molecule id="O14967-1"/>
    <property type="organism name" value="human"/>
</dbReference>
<dbReference type="AGR" id="HGNC:2060"/>
<dbReference type="CTD" id="1047"/>
<dbReference type="DisGeNET" id="1047"/>
<dbReference type="GeneCards" id="CLGN"/>
<dbReference type="HGNC" id="HGNC:2060">
    <property type="gene designation" value="CLGN"/>
</dbReference>
<dbReference type="HPA" id="ENSG00000153132">
    <property type="expression patterns" value="Tissue enhanced (heart muscle, testis)"/>
</dbReference>
<dbReference type="MIM" id="601858">
    <property type="type" value="gene"/>
</dbReference>
<dbReference type="neXtProt" id="NX_O14967"/>
<dbReference type="OpenTargets" id="ENSG00000153132"/>
<dbReference type="PharmGKB" id="PA26587"/>
<dbReference type="VEuPathDB" id="HostDB:ENSG00000153132"/>
<dbReference type="eggNOG" id="KOG0675">
    <property type="taxonomic scope" value="Eukaryota"/>
</dbReference>
<dbReference type="GeneTree" id="ENSGT00950000182915"/>
<dbReference type="HOGENOM" id="CLU_018224_2_0_1"/>
<dbReference type="InParanoid" id="O14967"/>
<dbReference type="OMA" id="KHAKPPN"/>
<dbReference type="OrthoDB" id="1938156at2759"/>
<dbReference type="PAN-GO" id="O14967">
    <property type="GO annotations" value="4 GO annotations based on evolutionary models"/>
</dbReference>
<dbReference type="PhylomeDB" id="O14967"/>
<dbReference type="TreeFam" id="TF300618"/>
<dbReference type="PathwayCommons" id="O14967"/>
<dbReference type="SignaLink" id="O14967"/>
<dbReference type="BioGRID-ORCS" id="1047">
    <property type="hits" value="14 hits in 1151 CRISPR screens"/>
</dbReference>
<dbReference type="ChiTaRS" id="CLGN">
    <property type="organism name" value="human"/>
</dbReference>
<dbReference type="GeneWiki" id="Calmegin"/>
<dbReference type="GenomeRNAi" id="1047"/>
<dbReference type="Pharos" id="O14967">
    <property type="development level" value="Tbio"/>
</dbReference>
<dbReference type="PRO" id="PR:O14967"/>
<dbReference type="Proteomes" id="UP000005640">
    <property type="component" value="Chromosome 4"/>
</dbReference>
<dbReference type="RNAct" id="O14967">
    <property type="molecule type" value="protein"/>
</dbReference>
<dbReference type="Bgee" id="ENSG00000153132">
    <property type="expression patterns" value="Expressed in heart right ventricle and 138 other cell types or tissues"/>
</dbReference>
<dbReference type="ExpressionAtlas" id="O14967">
    <property type="expression patterns" value="baseline and differential"/>
</dbReference>
<dbReference type="GO" id="GO:0005783">
    <property type="term" value="C:endoplasmic reticulum"/>
    <property type="evidence" value="ECO:0000304"/>
    <property type="project" value="ProtInc"/>
</dbReference>
<dbReference type="GO" id="GO:0005789">
    <property type="term" value="C:endoplasmic reticulum membrane"/>
    <property type="evidence" value="ECO:0000318"/>
    <property type="project" value="GO_Central"/>
</dbReference>
<dbReference type="GO" id="GO:0005635">
    <property type="term" value="C:nuclear envelope"/>
    <property type="evidence" value="ECO:0007669"/>
    <property type="project" value="Ensembl"/>
</dbReference>
<dbReference type="GO" id="GO:0005509">
    <property type="term" value="F:calcium ion binding"/>
    <property type="evidence" value="ECO:0000318"/>
    <property type="project" value="GO_Central"/>
</dbReference>
<dbReference type="GO" id="GO:0044183">
    <property type="term" value="F:protein folding chaperone"/>
    <property type="evidence" value="ECO:0007669"/>
    <property type="project" value="Ensembl"/>
</dbReference>
<dbReference type="GO" id="GO:0051082">
    <property type="term" value="F:unfolded protein binding"/>
    <property type="evidence" value="ECO:0000304"/>
    <property type="project" value="ProtInc"/>
</dbReference>
<dbReference type="GO" id="GO:0007339">
    <property type="term" value="P:binding of sperm to zona pellucida"/>
    <property type="evidence" value="ECO:0007669"/>
    <property type="project" value="Ensembl"/>
</dbReference>
<dbReference type="GO" id="GO:0036503">
    <property type="term" value="P:ERAD pathway"/>
    <property type="evidence" value="ECO:0000318"/>
    <property type="project" value="GO_Central"/>
</dbReference>
<dbReference type="GO" id="GO:0006457">
    <property type="term" value="P:protein folding"/>
    <property type="evidence" value="ECO:0000318"/>
    <property type="project" value="GO_Central"/>
</dbReference>
<dbReference type="GO" id="GO:0065003">
    <property type="term" value="P:protein-containing complex assembly"/>
    <property type="evidence" value="ECO:0007669"/>
    <property type="project" value="Ensembl"/>
</dbReference>
<dbReference type="GO" id="GO:0007338">
    <property type="term" value="P:single fertilization"/>
    <property type="evidence" value="ECO:0000304"/>
    <property type="project" value="ProtInc"/>
</dbReference>
<dbReference type="FunFam" id="2.10.250.10:FF:000001">
    <property type="entry name" value="Calnexin homolog"/>
    <property type="match status" value="1"/>
</dbReference>
<dbReference type="FunFam" id="2.60.120.200:FF:000430">
    <property type="entry name" value="Si:ch211-274f20.2"/>
    <property type="match status" value="1"/>
</dbReference>
<dbReference type="Gene3D" id="2.60.120.200">
    <property type="match status" value="1"/>
</dbReference>
<dbReference type="Gene3D" id="2.10.250.10">
    <property type="entry name" value="Calreticulin/calnexin, P domain"/>
    <property type="match status" value="1"/>
</dbReference>
<dbReference type="InterPro" id="IPR001580">
    <property type="entry name" value="Calret/calnex"/>
</dbReference>
<dbReference type="InterPro" id="IPR018124">
    <property type="entry name" value="Calret/calnex_CS"/>
</dbReference>
<dbReference type="InterPro" id="IPR009033">
    <property type="entry name" value="Calreticulin/calnexin_P_dom_sf"/>
</dbReference>
<dbReference type="InterPro" id="IPR013320">
    <property type="entry name" value="ConA-like_dom_sf"/>
</dbReference>
<dbReference type="PANTHER" id="PTHR11073:SF7">
    <property type="entry name" value="CALMEGIN"/>
    <property type="match status" value="1"/>
</dbReference>
<dbReference type="PANTHER" id="PTHR11073">
    <property type="entry name" value="CALRETICULIN AND CALNEXIN"/>
    <property type="match status" value="1"/>
</dbReference>
<dbReference type="Pfam" id="PF00262">
    <property type="entry name" value="Calreticulin"/>
    <property type="match status" value="1"/>
</dbReference>
<dbReference type="PRINTS" id="PR00626">
    <property type="entry name" value="CALRETICULIN"/>
</dbReference>
<dbReference type="SUPFAM" id="SSF49899">
    <property type="entry name" value="Concanavalin A-like lectins/glucanases"/>
    <property type="match status" value="1"/>
</dbReference>
<dbReference type="SUPFAM" id="SSF63887">
    <property type="entry name" value="P-domain of calnexin/calreticulin"/>
    <property type="match status" value="1"/>
</dbReference>
<dbReference type="PROSITE" id="PS00803">
    <property type="entry name" value="CALRETICULIN_1"/>
    <property type="match status" value="1"/>
</dbReference>
<dbReference type="PROSITE" id="PS00804">
    <property type="entry name" value="CALRETICULIN_2"/>
    <property type="match status" value="1"/>
</dbReference>
<dbReference type="PROSITE" id="PS00805">
    <property type="entry name" value="CALRETICULIN_REPEAT"/>
    <property type="match status" value="2"/>
</dbReference>